<keyword id="KW-0150">Chloroplast</keyword>
<keyword id="KW-0240">DNA-directed RNA polymerase</keyword>
<keyword id="KW-0479">Metal-binding</keyword>
<keyword id="KW-0548">Nucleotidyltransferase</keyword>
<keyword id="KW-0934">Plastid</keyword>
<keyword id="KW-0804">Transcription</keyword>
<keyword id="KW-0808">Transferase</keyword>
<keyword id="KW-0862">Zinc</keyword>
<comment type="function">
    <text evidence="1">DNA-dependent RNA polymerase catalyzes the transcription of DNA into RNA using the four ribonucleoside triphosphates as substrates.</text>
</comment>
<comment type="catalytic activity">
    <reaction evidence="1">
        <text>RNA(n) + a ribonucleoside 5'-triphosphate = RNA(n+1) + diphosphate</text>
        <dbReference type="Rhea" id="RHEA:21248"/>
        <dbReference type="Rhea" id="RHEA-COMP:14527"/>
        <dbReference type="Rhea" id="RHEA-COMP:17342"/>
        <dbReference type="ChEBI" id="CHEBI:33019"/>
        <dbReference type="ChEBI" id="CHEBI:61557"/>
        <dbReference type="ChEBI" id="CHEBI:140395"/>
        <dbReference type="EC" id="2.7.7.6"/>
    </reaction>
</comment>
<comment type="cofactor">
    <cofactor evidence="1">
        <name>Zn(2+)</name>
        <dbReference type="ChEBI" id="CHEBI:29105"/>
    </cofactor>
    <text evidence="1">Binds 1 Zn(2+) ion per subunit.</text>
</comment>
<comment type="subunit">
    <text evidence="1">In plastids the minimal PEP RNA polymerase catalytic core is composed of four subunits: alpha, beta, beta', and beta''. When a (nuclear-encoded) sigma factor is associated with the core the holoenzyme is formed, which can initiate transcription.</text>
</comment>
<comment type="subcellular location">
    <subcellularLocation>
        <location evidence="1">Plastid</location>
        <location evidence="1">Chloroplast</location>
    </subcellularLocation>
</comment>
<comment type="similarity">
    <text evidence="1">Belongs to the RNA polymerase beta' chain family. RpoC2 subfamily.</text>
</comment>
<organism>
    <name type="scientific">Eucalyptus globulus subsp. globulus</name>
    <name type="common">Tasmanian blue gum</name>
    <dbReference type="NCBI Taxonomy" id="71271"/>
    <lineage>
        <taxon>Eukaryota</taxon>
        <taxon>Viridiplantae</taxon>
        <taxon>Streptophyta</taxon>
        <taxon>Embryophyta</taxon>
        <taxon>Tracheophyta</taxon>
        <taxon>Spermatophyta</taxon>
        <taxon>Magnoliopsida</taxon>
        <taxon>eudicotyledons</taxon>
        <taxon>Gunneridae</taxon>
        <taxon>Pentapetalae</taxon>
        <taxon>rosids</taxon>
        <taxon>malvids</taxon>
        <taxon>Myrtales</taxon>
        <taxon>Myrtaceae</taxon>
        <taxon>Myrtoideae</taxon>
        <taxon>Eucalypteae</taxon>
        <taxon>Eucalyptus</taxon>
    </lineage>
</organism>
<proteinExistence type="inferred from homology"/>
<name>RPOC2_EUCGG</name>
<protein>
    <recommendedName>
        <fullName evidence="1">DNA-directed RNA polymerase subunit beta''</fullName>
        <ecNumber evidence="1">2.7.7.6</ecNumber>
    </recommendedName>
    <alternativeName>
        <fullName evidence="1">PEP</fullName>
    </alternativeName>
    <alternativeName>
        <fullName evidence="1">Plastid-encoded RNA polymerase subunit beta''</fullName>
        <shortName evidence="1">RNA polymerase subunit beta''</shortName>
    </alternativeName>
</protein>
<sequence>MEVLMAERVNLVFHNKVIDGTAIKRLISRLIDHFGMAYTSHILDQVKTLGFQQATATSISLGIDDLLTIPSKGWLVQDAEQQSLILEKHHHYGNVHAVEKLRQSIEVWYATSEYLRQEMNPNFRMTDPFNPVHIMSFSGARGNASQVHQLVGMRGLMSDPQGQMIDLPIQSNLREGLSLTEYIISCYGARKGVVDTAVRTSDAGYLTRRLVEVVQHIVVRRTDCGTIRGVSVSPRNGMMPERIFIQTLIGRVLADDIYMGPRCIAIRNQDIGIGLVNRFITFRTQPISIRTPFTCRSTSWICRLCYGRSPTHGDLVELGEAVGIIAGQSIGEPGTQLTLRTFHTGGVFTGGTAEHVRAPSNGKIKFNDDLVHPTRTRHGHPAFLCSIDLYVTIESEDILHNVTIPPKSFLLVQNNQYVESEQVIAEIRAGTYTFNLKERVRKHIYSESEGEMHWSTDVYHAPEFTYSNVHLLPKTSHLWILSGGSCRSSRVPFSLYKDQDQMNLRSTERERRYISSLSVNNDQMRYELCSSDFSGKIKEDRIPDYSELNRIISIVHCNLKYPTTFDENSDLLAKRRRNRFLIPLQSIQERKKELMPHSGISIELPINGILRRNSILAYFDDPRYRRKSSGIIKYGTLGVHSVVKKEDLIEYRGIKEFKQKCQMKLDPFFFIPEEVHIFPESSSIMVRNNSLIGVDTRIALNTRSRVGGLVRVERKKKRIELKIFSGDIHFPGETDKISRHSGILIPPGTGKTNFKESKKWKNWIYVQRITPTKKKYFVLVRPVVTYEVLDGINLATLFPPDLLQERDNMQLRVVNYIVYRNGKPIRGISDTSIQLVRTCLILNWDQDKKSSSIEEAHTSFVEVSTNGLIRDFLRIDLVKFPISYLRKRNDPSGSGLISDSDNVSDHTNSNPFYSKTKIQQLLSQNQGTIRTLLNKNKECPSLIILSSSNCFRMGPFNAGKYHNVIKESIKKDPIIKIRNSIGPLGTVLQFVNFYSFYYLITHNPILVTKYLQLENLKQTFQVINYYLMDENGRILNPDSCSNIVLNSFNLNWYFLHHNYYHNYFEERSTIISLGQFICENVCISKNGPHLKSGQVLIVQVDSVVIRSAKPYLATPGATVHGHYGEILYEGDTLVTFIYEKSRSGDITQGLPKVEQVLEVRSIDSISMNLEKRIEGWNEHIKKILGIPWGFLIGAELTIVQSRISLVNKIQKVYRSQGVQIHNRHIEIIVRQITSKVLVSEDGMSNVFLPGELIGLLRAARTGRALEESICYRAILLGITRASLNTQSFISEASFQETARVLAKAALRGRIDWLKGLKENVVIGGMIPVGTGFKGLVHRSRQHKNIPLKTKKKNFFEGEIGDILFHHRELFDSSISKKFHDTSEQSFRGFNDS</sequence>
<geneLocation type="chloroplast"/>
<dbReference type="EC" id="2.7.7.6" evidence="1"/>
<dbReference type="EMBL" id="AY780259">
    <property type="protein sequence ID" value="AAX21019.1"/>
    <property type="molecule type" value="Genomic_DNA"/>
</dbReference>
<dbReference type="RefSeq" id="YP_636289.1">
    <property type="nucleotide sequence ID" value="NC_008115.1"/>
</dbReference>
<dbReference type="SMR" id="Q49L08"/>
<dbReference type="GeneID" id="4108360"/>
<dbReference type="GO" id="GO:0009507">
    <property type="term" value="C:chloroplast"/>
    <property type="evidence" value="ECO:0007669"/>
    <property type="project" value="UniProtKB-SubCell"/>
</dbReference>
<dbReference type="GO" id="GO:0000428">
    <property type="term" value="C:DNA-directed RNA polymerase complex"/>
    <property type="evidence" value="ECO:0007669"/>
    <property type="project" value="UniProtKB-KW"/>
</dbReference>
<dbReference type="GO" id="GO:0005739">
    <property type="term" value="C:mitochondrion"/>
    <property type="evidence" value="ECO:0007669"/>
    <property type="project" value="GOC"/>
</dbReference>
<dbReference type="GO" id="GO:0003677">
    <property type="term" value="F:DNA binding"/>
    <property type="evidence" value="ECO:0007669"/>
    <property type="project" value="UniProtKB-UniRule"/>
</dbReference>
<dbReference type="GO" id="GO:0003899">
    <property type="term" value="F:DNA-directed RNA polymerase activity"/>
    <property type="evidence" value="ECO:0007669"/>
    <property type="project" value="UniProtKB-UniRule"/>
</dbReference>
<dbReference type="GO" id="GO:0008270">
    <property type="term" value="F:zinc ion binding"/>
    <property type="evidence" value="ECO:0007669"/>
    <property type="project" value="UniProtKB-UniRule"/>
</dbReference>
<dbReference type="GO" id="GO:0006351">
    <property type="term" value="P:DNA-templated transcription"/>
    <property type="evidence" value="ECO:0007669"/>
    <property type="project" value="UniProtKB-UniRule"/>
</dbReference>
<dbReference type="CDD" id="cd02655">
    <property type="entry name" value="RNAP_beta'_C"/>
    <property type="match status" value="1"/>
</dbReference>
<dbReference type="FunFam" id="1.10.132.30:FF:000002">
    <property type="entry name" value="DNA-directed RNA polymerase subunit beta"/>
    <property type="match status" value="1"/>
</dbReference>
<dbReference type="FunFam" id="1.10.1790.20:FF:000002">
    <property type="entry name" value="DNA-directed RNA polymerase subunit beta"/>
    <property type="match status" value="1"/>
</dbReference>
<dbReference type="Gene3D" id="1.10.132.30">
    <property type="match status" value="1"/>
</dbReference>
<dbReference type="Gene3D" id="1.10.150.390">
    <property type="match status" value="1"/>
</dbReference>
<dbReference type="Gene3D" id="1.10.1790.20">
    <property type="match status" value="1"/>
</dbReference>
<dbReference type="Gene3D" id="1.10.274.100">
    <property type="entry name" value="RNA polymerase Rpb1, domain 3"/>
    <property type="match status" value="1"/>
</dbReference>
<dbReference type="HAMAP" id="MF_01324">
    <property type="entry name" value="RNApol_bact_RpoC2"/>
    <property type="match status" value="1"/>
</dbReference>
<dbReference type="InterPro" id="IPR012756">
    <property type="entry name" value="DNA-dir_RpoC2_beta_pp"/>
</dbReference>
<dbReference type="InterPro" id="IPR050254">
    <property type="entry name" value="RNA_pol_beta''_euk"/>
</dbReference>
<dbReference type="InterPro" id="IPR042102">
    <property type="entry name" value="RNA_pol_Rpb1_3_sf"/>
</dbReference>
<dbReference type="InterPro" id="IPR007083">
    <property type="entry name" value="RNA_pol_Rpb1_4"/>
</dbReference>
<dbReference type="InterPro" id="IPR007081">
    <property type="entry name" value="RNA_pol_Rpb1_5"/>
</dbReference>
<dbReference type="InterPro" id="IPR038120">
    <property type="entry name" value="Rpb1_funnel_sf"/>
</dbReference>
<dbReference type="NCBIfam" id="TIGR02388">
    <property type="entry name" value="rpoC2_cyan"/>
    <property type="match status" value="1"/>
</dbReference>
<dbReference type="PANTHER" id="PTHR34995">
    <property type="entry name" value="DNA-DIRECTED RNA POLYMERASE SUBUNIT BETA"/>
    <property type="match status" value="1"/>
</dbReference>
<dbReference type="PANTHER" id="PTHR34995:SF1">
    <property type="entry name" value="DNA-DIRECTED RNA POLYMERASE SUBUNIT BETA"/>
    <property type="match status" value="1"/>
</dbReference>
<dbReference type="Pfam" id="PF05000">
    <property type="entry name" value="RNA_pol_Rpb1_4"/>
    <property type="match status" value="1"/>
</dbReference>
<dbReference type="Pfam" id="PF04998">
    <property type="entry name" value="RNA_pol_Rpb1_5"/>
    <property type="match status" value="2"/>
</dbReference>
<dbReference type="SUPFAM" id="SSF64484">
    <property type="entry name" value="beta and beta-prime subunits of DNA dependent RNA-polymerase"/>
    <property type="match status" value="1"/>
</dbReference>
<feature type="chain" id="PRO_0000225333" description="DNA-directed RNA polymerase subunit beta''">
    <location>
        <begin position="1"/>
        <end position="1392"/>
    </location>
</feature>
<feature type="binding site" evidence="1">
    <location>
        <position position="224"/>
    </location>
    <ligand>
        <name>Zn(2+)</name>
        <dbReference type="ChEBI" id="CHEBI:29105"/>
    </ligand>
</feature>
<feature type="binding site" evidence="1">
    <location>
        <position position="295"/>
    </location>
    <ligand>
        <name>Zn(2+)</name>
        <dbReference type="ChEBI" id="CHEBI:29105"/>
    </ligand>
</feature>
<feature type="binding site" evidence="1">
    <location>
        <position position="302"/>
    </location>
    <ligand>
        <name>Zn(2+)</name>
        <dbReference type="ChEBI" id="CHEBI:29105"/>
    </ligand>
</feature>
<feature type="binding site" evidence="1">
    <location>
        <position position="305"/>
    </location>
    <ligand>
        <name>Zn(2+)</name>
        <dbReference type="ChEBI" id="CHEBI:29105"/>
    </ligand>
</feature>
<accession>Q49L08</accession>
<reference key="1">
    <citation type="journal article" date="2005" name="DNA Res.">
        <title>Complete nucleotide sequence of the chloroplast genome from the Tasmanian blue gum, Eucalyptus globulus (Myrtaceae).</title>
        <authorList>
            <person name="Steane D.A."/>
        </authorList>
    </citation>
    <scope>NUCLEOTIDE SEQUENCE [LARGE SCALE GENOMIC DNA]</scope>
</reference>
<evidence type="ECO:0000255" key="1">
    <source>
        <dbReference type="HAMAP-Rule" id="MF_01324"/>
    </source>
</evidence>
<gene>
    <name evidence="1" type="primary">rpoC2</name>
</gene>